<feature type="chain" id="PRO_0000054214" description="Inner membrane transport protein YbaT">
    <location>
        <begin position="1"/>
        <end position="430"/>
    </location>
</feature>
<feature type="topological domain" description="Cytoplasmic" evidence="1">
    <location>
        <begin position="1"/>
        <end position="14"/>
    </location>
</feature>
<feature type="transmembrane region" description="Helical" evidence="1">
    <location>
        <begin position="15"/>
        <end position="35"/>
    </location>
</feature>
<feature type="topological domain" description="Periplasmic" evidence="1">
    <location>
        <begin position="36"/>
        <end position="38"/>
    </location>
</feature>
<feature type="transmembrane region" description="Helical" evidence="1">
    <location>
        <begin position="39"/>
        <end position="59"/>
    </location>
</feature>
<feature type="topological domain" description="Cytoplasmic" evidence="1">
    <location>
        <begin position="60"/>
        <end position="88"/>
    </location>
</feature>
<feature type="transmembrane region" description="Helical" evidence="1">
    <location>
        <begin position="89"/>
        <end position="109"/>
    </location>
</feature>
<feature type="topological domain" description="Periplasmic" evidence="1">
    <location>
        <begin position="110"/>
        <end position="128"/>
    </location>
</feature>
<feature type="transmembrane region" description="Helical" evidence="1">
    <location>
        <begin position="129"/>
        <end position="149"/>
    </location>
</feature>
<feature type="topological domain" description="Cytoplasmic" evidence="1">
    <location>
        <begin position="150"/>
        <end position="157"/>
    </location>
</feature>
<feature type="transmembrane region" description="Helical" evidence="1">
    <location>
        <begin position="158"/>
        <end position="178"/>
    </location>
</feature>
<feature type="topological domain" description="Periplasmic" evidence="1">
    <location>
        <begin position="179"/>
        <end position="192"/>
    </location>
</feature>
<feature type="transmembrane region" description="Helical" evidence="1">
    <location>
        <begin position="193"/>
        <end position="213"/>
    </location>
</feature>
<feature type="topological domain" description="Cytoplasmic" evidence="1">
    <location>
        <begin position="214"/>
        <end position="228"/>
    </location>
</feature>
<feature type="transmembrane region" description="Helical" evidence="1">
    <location>
        <begin position="229"/>
        <end position="249"/>
    </location>
</feature>
<feature type="topological domain" description="Periplasmic" evidence="1">
    <location>
        <begin position="250"/>
        <end position="272"/>
    </location>
</feature>
<feature type="transmembrane region" description="Helical" evidence="1">
    <location>
        <begin position="273"/>
        <end position="293"/>
    </location>
</feature>
<feature type="topological domain" description="Cytoplasmic" evidence="1">
    <location>
        <begin position="294"/>
        <end position="325"/>
    </location>
</feature>
<feature type="transmembrane region" description="Helical" evidence="1">
    <location>
        <begin position="326"/>
        <end position="346"/>
    </location>
</feature>
<feature type="topological domain" description="Periplasmic" evidence="1">
    <location>
        <position position="347"/>
    </location>
</feature>
<feature type="transmembrane region" description="Helical" evidence="1">
    <location>
        <begin position="348"/>
        <end position="368"/>
    </location>
</feature>
<feature type="topological domain" description="Cytoplasmic" evidence="1">
    <location>
        <begin position="369"/>
        <end position="379"/>
    </location>
</feature>
<feature type="transmembrane region" description="Helical" evidence="1">
    <location>
        <begin position="380"/>
        <end position="400"/>
    </location>
</feature>
<feature type="topological domain" description="Periplasmic" evidence="1">
    <location>
        <begin position="401"/>
        <end position="403"/>
    </location>
</feature>
<feature type="transmembrane region" description="Helical" evidence="1">
    <location>
        <begin position="404"/>
        <end position="424"/>
    </location>
</feature>
<feature type="topological domain" description="Cytoplasmic" evidence="1">
    <location>
        <begin position="425"/>
        <end position="430"/>
    </location>
</feature>
<reference key="1">
    <citation type="submission" date="1997-01" db="EMBL/GenBank/DDBJ databases">
        <title>Sequence of minutes 4-25 of Escherichia coli.</title>
        <authorList>
            <person name="Chung E."/>
            <person name="Allen E."/>
            <person name="Araujo R."/>
            <person name="Aparicio A.M."/>
            <person name="Davis K."/>
            <person name="Duncan M."/>
            <person name="Federspiel N."/>
            <person name="Hyman R."/>
            <person name="Kalman S."/>
            <person name="Komp C."/>
            <person name="Kurdi O."/>
            <person name="Lew H."/>
            <person name="Lin D."/>
            <person name="Namath A."/>
            <person name="Oefner P."/>
            <person name="Roberts D."/>
            <person name="Schramm S."/>
            <person name="Davis R.W."/>
        </authorList>
    </citation>
    <scope>NUCLEOTIDE SEQUENCE [LARGE SCALE GENOMIC DNA]</scope>
    <source>
        <strain>K12 / MG1655 / ATCC 47076</strain>
    </source>
</reference>
<reference key="2">
    <citation type="journal article" date="1997" name="Science">
        <title>The complete genome sequence of Escherichia coli K-12.</title>
        <authorList>
            <person name="Blattner F.R."/>
            <person name="Plunkett G. III"/>
            <person name="Bloch C.A."/>
            <person name="Perna N.T."/>
            <person name="Burland V."/>
            <person name="Riley M."/>
            <person name="Collado-Vides J."/>
            <person name="Glasner J.D."/>
            <person name="Rode C.K."/>
            <person name="Mayhew G.F."/>
            <person name="Gregor J."/>
            <person name="Davis N.W."/>
            <person name="Kirkpatrick H.A."/>
            <person name="Goeden M.A."/>
            <person name="Rose D.J."/>
            <person name="Mau B."/>
            <person name="Shao Y."/>
        </authorList>
    </citation>
    <scope>NUCLEOTIDE SEQUENCE [LARGE SCALE GENOMIC DNA]</scope>
    <source>
        <strain>K12 / MG1655 / ATCC 47076</strain>
    </source>
</reference>
<reference key="3">
    <citation type="journal article" date="2006" name="Mol. Syst. Biol.">
        <title>Highly accurate genome sequences of Escherichia coli K-12 strains MG1655 and W3110.</title>
        <authorList>
            <person name="Hayashi K."/>
            <person name="Morooka N."/>
            <person name="Yamamoto Y."/>
            <person name="Fujita K."/>
            <person name="Isono K."/>
            <person name="Choi S."/>
            <person name="Ohtsubo E."/>
            <person name="Baba T."/>
            <person name="Wanner B.L."/>
            <person name="Mori H."/>
            <person name="Horiuchi T."/>
        </authorList>
    </citation>
    <scope>NUCLEOTIDE SEQUENCE [LARGE SCALE GENOMIC DNA]</scope>
    <source>
        <strain>K12 / W3110 / ATCC 27325 / DSM 5911</strain>
    </source>
</reference>
<reference key="4">
    <citation type="journal article" date="2005" name="Science">
        <title>Global topology analysis of the Escherichia coli inner membrane proteome.</title>
        <authorList>
            <person name="Daley D.O."/>
            <person name="Rapp M."/>
            <person name="Granseth E."/>
            <person name="Melen K."/>
            <person name="Drew D."/>
            <person name="von Heijne G."/>
        </authorList>
    </citation>
    <scope>TOPOLOGY [LARGE SCALE ANALYSIS]</scope>
    <source>
        <strain>K12 / MG1655 / ATCC 47076</strain>
    </source>
</reference>
<comment type="function">
    <text>Probable amino-acid or metabolite transport protein.</text>
</comment>
<comment type="subcellular location">
    <subcellularLocation>
        <location>Cell inner membrane</location>
        <topology>Multi-pass membrane protein</topology>
    </subcellularLocation>
</comment>
<comment type="similarity">
    <text evidence="2">Belongs to the amino acid-polyamine-organocation (APC) superfamily.</text>
</comment>
<proteinExistence type="evidence at protein level"/>
<gene>
    <name type="primary">ybaT</name>
    <name type="ordered locus">b0486</name>
    <name type="ordered locus">JW0475</name>
</gene>
<keyword id="KW-0029">Amino-acid transport</keyword>
<keyword id="KW-0997">Cell inner membrane</keyword>
<keyword id="KW-1003">Cell membrane</keyword>
<keyword id="KW-0472">Membrane</keyword>
<keyword id="KW-1185">Reference proteome</keyword>
<keyword id="KW-0812">Transmembrane</keyword>
<keyword id="KW-1133">Transmembrane helix</keyword>
<keyword id="KW-0813">Transport</keyword>
<evidence type="ECO:0000255" key="1"/>
<evidence type="ECO:0000305" key="2"/>
<name>YBAT_ECOLI</name>
<accession>P77400</accession>
<accession>Q2MBU1</accession>
<protein>
    <recommendedName>
        <fullName>Inner membrane transport protein YbaT</fullName>
    </recommendedName>
</protein>
<organism>
    <name type="scientific">Escherichia coli (strain K12)</name>
    <dbReference type="NCBI Taxonomy" id="83333"/>
    <lineage>
        <taxon>Bacteria</taxon>
        <taxon>Pseudomonadati</taxon>
        <taxon>Pseudomonadota</taxon>
        <taxon>Gammaproteobacteria</taxon>
        <taxon>Enterobacterales</taxon>
        <taxon>Enterobacteriaceae</taxon>
        <taxon>Escherichia</taxon>
    </lineage>
</organism>
<dbReference type="EMBL" id="U82664">
    <property type="protein sequence ID" value="AAB40240.1"/>
    <property type="molecule type" value="Genomic_DNA"/>
</dbReference>
<dbReference type="EMBL" id="U00096">
    <property type="protein sequence ID" value="AAC73588.1"/>
    <property type="molecule type" value="Genomic_DNA"/>
</dbReference>
<dbReference type="EMBL" id="AP009048">
    <property type="protein sequence ID" value="BAE76265.1"/>
    <property type="molecule type" value="Genomic_DNA"/>
</dbReference>
<dbReference type="PIR" id="E64779">
    <property type="entry name" value="E64779"/>
</dbReference>
<dbReference type="RefSeq" id="NP_415019.1">
    <property type="nucleotide sequence ID" value="NC_000913.3"/>
</dbReference>
<dbReference type="RefSeq" id="WP_000982172.1">
    <property type="nucleotide sequence ID" value="NZ_STEB01000007.1"/>
</dbReference>
<dbReference type="SMR" id="P77400"/>
<dbReference type="BioGRID" id="4261285">
    <property type="interactions" value="128"/>
</dbReference>
<dbReference type="DIP" id="DIP-11308N"/>
<dbReference type="FunCoup" id="P77400">
    <property type="interactions" value="88"/>
</dbReference>
<dbReference type="IntAct" id="P77400">
    <property type="interactions" value="1"/>
</dbReference>
<dbReference type="STRING" id="511145.b0486"/>
<dbReference type="TCDB" id="2.A.3.6.4">
    <property type="family name" value="the amino acid-polyamine-organocation (apc) family"/>
</dbReference>
<dbReference type="jPOST" id="P77400"/>
<dbReference type="PaxDb" id="511145-b0486"/>
<dbReference type="EnsemblBacteria" id="AAC73588">
    <property type="protein sequence ID" value="AAC73588"/>
    <property type="gene ID" value="b0486"/>
</dbReference>
<dbReference type="GeneID" id="945363"/>
<dbReference type="KEGG" id="ecj:JW0475"/>
<dbReference type="KEGG" id="eco:b0486"/>
<dbReference type="KEGG" id="ecoc:C3026_02390"/>
<dbReference type="PATRIC" id="fig|1411691.4.peg.1790"/>
<dbReference type="EchoBASE" id="EB3037"/>
<dbReference type="eggNOG" id="COG0531">
    <property type="taxonomic scope" value="Bacteria"/>
</dbReference>
<dbReference type="HOGENOM" id="CLU_007946_15_2_6"/>
<dbReference type="InParanoid" id="P77400"/>
<dbReference type="OMA" id="WVSARYT"/>
<dbReference type="OrthoDB" id="9804700at2"/>
<dbReference type="PhylomeDB" id="P77400"/>
<dbReference type="BioCyc" id="EcoCyc:B0486-MONOMER"/>
<dbReference type="PRO" id="PR:P77400"/>
<dbReference type="Proteomes" id="UP000000625">
    <property type="component" value="Chromosome"/>
</dbReference>
<dbReference type="GO" id="GO:0005886">
    <property type="term" value="C:plasma membrane"/>
    <property type="evidence" value="ECO:0000314"/>
    <property type="project" value="EcoCyc"/>
</dbReference>
<dbReference type="GO" id="GO:0022857">
    <property type="term" value="F:transmembrane transporter activity"/>
    <property type="evidence" value="ECO:0007669"/>
    <property type="project" value="InterPro"/>
</dbReference>
<dbReference type="GO" id="GO:0006865">
    <property type="term" value="P:amino acid transport"/>
    <property type="evidence" value="ECO:0007669"/>
    <property type="project" value="UniProtKB-KW"/>
</dbReference>
<dbReference type="GO" id="GO:0009268">
    <property type="term" value="P:response to pH"/>
    <property type="evidence" value="ECO:0000270"/>
    <property type="project" value="EcoCyc"/>
</dbReference>
<dbReference type="GO" id="GO:1990169">
    <property type="term" value="P:stress response to copper ion"/>
    <property type="evidence" value="ECO:0000314"/>
    <property type="project" value="EcoCyc"/>
</dbReference>
<dbReference type="FunFam" id="1.20.1740.10:FF:000029">
    <property type="entry name" value="Putative amino acid permease"/>
    <property type="match status" value="1"/>
</dbReference>
<dbReference type="Gene3D" id="1.20.1740.10">
    <property type="entry name" value="Amino acid/polyamine transporter I"/>
    <property type="match status" value="1"/>
</dbReference>
<dbReference type="InterPro" id="IPR002293">
    <property type="entry name" value="AA/rel_permease1"/>
</dbReference>
<dbReference type="InterPro" id="IPR050367">
    <property type="entry name" value="APC_superfamily"/>
</dbReference>
<dbReference type="PANTHER" id="PTHR42770">
    <property type="entry name" value="AMINO ACID TRANSPORTER-RELATED"/>
    <property type="match status" value="1"/>
</dbReference>
<dbReference type="PANTHER" id="PTHR42770:SF11">
    <property type="entry name" value="INNER MEMBRANE TRANSPORT PROTEIN YBAT"/>
    <property type="match status" value="1"/>
</dbReference>
<dbReference type="Pfam" id="PF13520">
    <property type="entry name" value="AA_permease_2"/>
    <property type="match status" value="1"/>
</dbReference>
<dbReference type="PIRSF" id="PIRSF006060">
    <property type="entry name" value="AA_transporter"/>
    <property type="match status" value="1"/>
</dbReference>
<sequence length="430" mass="45659">MMNTEGNNGNKPLGLWNVVSIGIGAMVGAGIFALLGQAALLMEASTWVAFAFGGIVAMFSGYAYARLGASYPSNGGIIDFFRRGLGNGVFSLALSLLYLLTLAVSIAMVARAFGAYAVQFLHEGSQEEHLILLYALGIIAVMTLFNSLSNHAVGRLEVILVGIKMMILLLLIIAGVWSLQPAHISVSAPPSSGAFFSCIGITFLAYAGFGMMANAADKVKDPQVIMPRAFLVAIGVTTLLYISLALVLLSDVSALELEKYADTAVAQAASPLLGHVGYVIVVIGALLATASAINANLFAVFNIMDNMGSERELPKLMNKSLWRQSTWGNIIVVVLIMLMTAALNLGSLASVASATFLICYLAVFVVAIRLRHDIHASLPILIVGTLVMLLVIVGFIYSLWSQGSRALIWIIGSLLLSLIVAMVMKRNKTV</sequence>